<proteinExistence type="inferred from homology"/>
<geneLocation type="chloroplast"/>
<evidence type="ECO:0000255" key="1">
    <source>
        <dbReference type="HAMAP-Rule" id="MF_01338"/>
    </source>
</evidence>
<dbReference type="EC" id="4.1.1.39" evidence="1"/>
<dbReference type="EMBL" id="Z77271">
    <property type="protein sequence ID" value="CAB01071.1"/>
    <property type="molecule type" value="Genomic_DNA"/>
</dbReference>
<dbReference type="SMR" id="P93913"/>
<dbReference type="GO" id="GO:0009507">
    <property type="term" value="C:chloroplast"/>
    <property type="evidence" value="ECO:0007669"/>
    <property type="project" value="UniProtKB-SubCell"/>
</dbReference>
<dbReference type="GO" id="GO:0000287">
    <property type="term" value="F:magnesium ion binding"/>
    <property type="evidence" value="ECO:0007669"/>
    <property type="project" value="InterPro"/>
</dbReference>
<dbReference type="GO" id="GO:0004497">
    <property type="term" value="F:monooxygenase activity"/>
    <property type="evidence" value="ECO:0007669"/>
    <property type="project" value="UniProtKB-KW"/>
</dbReference>
<dbReference type="GO" id="GO:0016984">
    <property type="term" value="F:ribulose-bisphosphate carboxylase activity"/>
    <property type="evidence" value="ECO:0007669"/>
    <property type="project" value="UniProtKB-EC"/>
</dbReference>
<dbReference type="GO" id="GO:0009853">
    <property type="term" value="P:photorespiration"/>
    <property type="evidence" value="ECO:0007669"/>
    <property type="project" value="UniProtKB-KW"/>
</dbReference>
<dbReference type="GO" id="GO:0019253">
    <property type="term" value="P:reductive pentose-phosphate cycle"/>
    <property type="evidence" value="ECO:0007669"/>
    <property type="project" value="UniProtKB-KW"/>
</dbReference>
<dbReference type="CDD" id="cd08212">
    <property type="entry name" value="RuBisCO_large_I"/>
    <property type="match status" value="1"/>
</dbReference>
<dbReference type="FunFam" id="3.20.20.110:FF:000001">
    <property type="entry name" value="Ribulose bisphosphate carboxylase large chain"/>
    <property type="match status" value="1"/>
</dbReference>
<dbReference type="FunFam" id="3.30.70.150:FF:000001">
    <property type="entry name" value="Ribulose bisphosphate carboxylase large chain"/>
    <property type="match status" value="1"/>
</dbReference>
<dbReference type="Gene3D" id="3.20.20.110">
    <property type="entry name" value="Ribulose bisphosphate carboxylase, large subunit, C-terminal domain"/>
    <property type="match status" value="1"/>
</dbReference>
<dbReference type="Gene3D" id="3.30.70.150">
    <property type="entry name" value="RuBisCO large subunit, N-terminal domain"/>
    <property type="match status" value="1"/>
</dbReference>
<dbReference type="HAMAP" id="MF_01338">
    <property type="entry name" value="RuBisCO_L_type1"/>
    <property type="match status" value="1"/>
</dbReference>
<dbReference type="InterPro" id="IPR033966">
    <property type="entry name" value="RuBisCO"/>
</dbReference>
<dbReference type="InterPro" id="IPR020878">
    <property type="entry name" value="RuBisCo_large_chain_AS"/>
</dbReference>
<dbReference type="InterPro" id="IPR000685">
    <property type="entry name" value="RuBisCO_lsu_C"/>
</dbReference>
<dbReference type="InterPro" id="IPR036376">
    <property type="entry name" value="RuBisCO_lsu_C_sf"/>
</dbReference>
<dbReference type="InterPro" id="IPR017443">
    <property type="entry name" value="RuBisCO_lsu_fd_N"/>
</dbReference>
<dbReference type="InterPro" id="IPR036422">
    <property type="entry name" value="RuBisCO_lsu_N_sf"/>
</dbReference>
<dbReference type="InterPro" id="IPR020888">
    <property type="entry name" value="RuBisCO_lsuI"/>
</dbReference>
<dbReference type="NCBIfam" id="NF003252">
    <property type="entry name" value="PRK04208.1"/>
    <property type="match status" value="1"/>
</dbReference>
<dbReference type="PANTHER" id="PTHR42704">
    <property type="entry name" value="RIBULOSE BISPHOSPHATE CARBOXYLASE"/>
    <property type="match status" value="1"/>
</dbReference>
<dbReference type="PANTHER" id="PTHR42704:SF15">
    <property type="entry name" value="RIBULOSE BISPHOSPHATE CARBOXYLASE LARGE CHAIN"/>
    <property type="match status" value="1"/>
</dbReference>
<dbReference type="Pfam" id="PF00016">
    <property type="entry name" value="RuBisCO_large"/>
    <property type="match status" value="1"/>
</dbReference>
<dbReference type="Pfam" id="PF02788">
    <property type="entry name" value="RuBisCO_large_N"/>
    <property type="match status" value="1"/>
</dbReference>
<dbReference type="SFLD" id="SFLDG01052">
    <property type="entry name" value="RuBisCO"/>
    <property type="match status" value="1"/>
</dbReference>
<dbReference type="SFLD" id="SFLDS00014">
    <property type="entry name" value="RuBisCO"/>
    <property type="match status" value="1"/>
</dbReference>
<dbReference type="SFLD" id="SFLDG00301">
    <property type="entry name" value="RuBisCO-like_proteins"/>
    <property type="match status" value="1"/>
</dbReference>
<dbReference type="SUPFAM" id="SSF51649">
    <property type="entry name" value="RuBisCo, C-terminal domain"/>
    <property type="match status" value="1"/>
</dbReference>
<dbReference type="SUPFAM" id="SSF54966">
    <property type="entry name" value="RuBisCO, large subunit, small (N-terminal) domain"/>
    <property type="match status" value="1"/>
</dbReference>
<dbReference type="PROSITE" id="PS00157">
    <property type="entry name" value="RUBISCO_LARGE"/>
    <property type="match status" value="1"/>
</dbReference>
<organism>
    <name type="scientific">Liriope muscari</name>
    <name type="common">Big blue lilyturf</name>
    <name type="synonym">Liriope platyphylla</name>
    <dbReference type="NCBI Taxonomy" id="39529"/>
    <lineage>
        <taxon>Eukaryota</taxon>
        <taxon>Viridiplantae</taxon>
        <taxon>Streptophyta</taxon>
        <taxon>Embryophyta</taxon>
        <taxon>Tracheophyta</taxon>
        <taxon>Spermatophyta</taxon>
        <taxon>Magnoliopsida</taxon>
        <taxon>Liliopsida</taxon>
        <taxon>Asparagales</taxon>
        <taxon>Asparagaceae</taxon>
        <taxon>Nolinoideae</taxon>
        <taxon>Liriope</taxon>
    </lineage>
</organism>
<name>RBL_LIRMU</name>
<gene>
    <name evidence="1" type="primary">rbcL</name>
</gene>
<reference key="1">
    <citation type="submission" date="1996-07" db="EMBL/GenBank/DDBJ databases">
        <authorList>
            <person name="Rudall P.J."/>
            <person name="Furness C.A."/>
            <person name="Fay M.F."/>
            <person name="Chase M.W."/>
        </authorList>
    </citation>
    <scope>NUCLEOTIDE SEQUENCE [GENOMIC DNA]</scope>
    <source>
        <tissue>Leaf</tissue>
    </source>
</reference>
<keyword id="KW-0113">Calvin cycle</keyword>
<keyword id="KW-0120">Carbon dioxide fixation</keyword>
<keyword id="KW-0150">Chloroplast</keyword>
<keyword id="KW-1015">Disulfide bond</keyword>
<keyword id="KW-0456">Lyase</keyword>
<keyword id="KW-0460">Magnesium</keyword>
<keyword id="KW-0479">Metal-binding</keyword>
<keyword id="KW-0488">Methylation</keyword>
<keyword id="KW-0503">Monooxygenase</keyword>
<keyword id="KW-0560">Oxidoreductase</keyword>
<keyword id="KW-0601">Photorespiration</keyword>
<keyword id="KW-0602">Photosynthesis</keyword>
<keyword id="KW-0934">Plastid</keyword>
<comment type="function">
    <text evidence="1">RuBisCO catalyzes two reactions: the carboxylation of D-ribulose 1,5-bisphosphate, the primary event in carbon dioxide fixation, as well as the oxidative fragmentation of the pentose substrate in the photorespiration process. Both reactions occur simultaneously and in competition at the same active site.</text>
</comment>
<comment type="catalytic activity">
    <reaction evidence="1">
        <text>2 (2R)-3-phosphoglycerate + 2 H(+) = D-ribulose 1,5-bisphosphate + CO2 + H2O</text>
        <dbReference type="Rhea" id="RHEA:23124"/>
        <dbReference type="ChEBI" id="CHEBI:15377"/>
        <dbReference type="ChEBI" id="CHEBI:15378"/>
        <dbReference type="ChEBI" id="CHEBI:16526"/>
        <dbReference type="ChEBI" id="CHEBI:57870"/>
        <dbReference type="ChEBI" id="CHEBI:58272"/>
        <dbReference type="EC" id="4.1.1.39"/>
    </reaction>
</comment>
<comment type="catalytic activity">
    <reaction evidence="1">
        <text>D-ribulose 1,5-bisphosphate + O2 = 2-phosphoglycolate + (2R)-3-phosphoglycerate + 2 H(+)</text>
        <dbReference type="Rhea" id="RHEA:36631"/>
        <dbReference type="ChEBI" id="CHEBI:15378"/>
        <dbReference type="ChEBI" id="CHEBI:15379"/>
        <dbReference type="ChEBI" id="CHEBI:57870"/>
        <dbReference type="ChEBI" id="CHEBI:58033"/>
        <dbReference type="ChEBI" id="CHEBI:58272"/>
    </reaction>
</comment>
<comment type="cofactor">
    <cofactor evidence="1">
        <name>Mg(2+)</name>
        <dbReference type="ChEBI" id="CHEBI:18420"/>
    </cofactor>
    <text evidence="1">Binds 1 Mg(2+) ion per subunit.</text>
</comment>
<comment type="subunit">
    <text evidence="1">Heterohexadecamer of 8 large chains and 8 small chains; disulfide-linked. The disulfide link is formed within the large subunit homodimers.</text>
</comment>
<comment type="subcellular location">
    <subcellularLocation>
        <location>Plastid</location>
        <location>Chloroplast</location>
    </subcellularLocation>
</comment>
<comment type="PTM">
    <text evidence="1">The disulfide bond which can form in the large chain dimeric partners within the hexadecamer appears to be associated with oxidative stress and protein turnover.</text>
</comment>
<comment type="miscellaneous">
    <text evidence="1">The basic functional RuBisCO is composed of a large chain homodimer in a 'head-to-tail' conformation. In form I RuBisCO this homodimer is arranged in a barrel-like tetramer with the small subunits forming a tetrameric 'cap' on each end of the 'barrel'.</text>
</comment>
<comment type="similarity">
    <text evidence="1">Belongs to the RuBisCO large chain family. Type I subfamily.</text>
</comment>
<feature type="chain" id="PRO_0000062503" description="Ribulose bisphosphate carboxylase large chain">
    <location>
        <begin position="1" status="less than"/>
        <end position="449" status="greater than"/>
    </location>
</feature>
<feature type="active site" description="Proton acceptor" evidence="1">
    <location>
        <position position="168"/>
    </location>
</feature>
<feature type="active site" description="Proton acceptor" evidence="1">
    <location>
        <position position="287"/>
    </location>
</feature>
<feature type="binding site" description="in homodimeric partner" evidence="1">
    <location>
        <position position="116"/>
    </location>
    <ligand>
        <name>substrate</name>
    </ligand>
</feature>
<feature type="binding site" evidence="1">
    <location>
        <position position="166"/>
    </location>
    <ligand>
        <name>substrate</name>
    </ligand>
</feature>
<feature type="binding site" evidence="1">
    <location>
        <position position="170"/>
    </location>
    <ligand>
        <name>substrate</name>
    </ligand>
</feature>
<feature type="binding site" description="via carbamate group" evidence="1">
    <location>
        <position position="194"/>
    </location>
    <ligand>
        <name>Mg(2+)</name>
        <dbReference type="ChEBI" id="CHEBI:18420"/>
    </ligand>
</feature>
<feature type="binding site" evidence="1">
    <location>
        <position position="196"/>
    </location>
    <ligand>
        <name>Mg(2+)</name>
        <dbReference type="ChEBI" id="CHEBI:18420"/>
    </ligand>
</feature>
<feature type="binding site" evidence="1">
    <location>
        <position position="197"/>
    </location>
    <ligand>
        <name>Mg(2+)</name>
        <dbReference type="ChEBI" id="CHEBI:18420"/>
    </ligand>
</feature>
<feature type="binding site" evidence="1">
    <location>
        <position position="288"/>
    </location>
    <ligand>
        <name>substrate</name>
    </ligand>
</feature>
<feature type="binding site" evidence="1">
    <location>
        <position position="320"/>
    </location>
    <ligand>
        <name>substrate</name>
    </ligand>
</feature>
<feature type="binding site" evidence="1">
    <location>
        <position position="372"/>
    </location>
    <ligand>
        <name>substrate</name>
    </ligand>
</feature>
<feature type="site" description="Transition state stabilizer" evidence="1">
    <location>
        <position position="327"/>
    </location>
</feature>
<feature type="modified residue" description="N6,N6,N6-trimethyllysine" evidence="1">
    <location>
        <position position="7"/>
    </location>
</feature>
<feature type="modified residue" description="N6-carboxylysine" evidence="1">
    <location>
        <position position="194"/>
    </location>
</feature>
<feature type="disulfide bond" description="Interchain; in linked form" evidence="1">
    <location>
        <position position="240"/>
    </location>
</feature>
<feature type="non-terminal residue">
    <location>
        <position position="1"/>
    </location>
</feature>
<feature type="non-terminal residue">
    <location>
        <position position="449"/>
    </location>
</feature>
<protein>
    <recommendedName>
        <fullName evidence="1">Ribulose bisphosphate carboxylase large chain</fullName>
        <shortName evidence="1">RuBisCO large subunit</shortName>
        <ecNumber evidence="1">4.1.1.39</ecNumber>
    </recommendedName>
</protein>
<sequence>KASVGFKAGVKDYRLTYYTPDYETKDTDILAAFRVTPQPGVPAEEAGAAVAAESSTGTWTTVWTDGLTSLDRYKGRCYHIEAVIGEENQYICYVAYPLDLFEEGSVTNMFTSIVGNVFGFKALRALRLEDLRIPPAYSKTFQGPPHGIQVERDKLNKYGRPLLGCTIKPKLGLSAKNYGRAVYECLRGGLDFTKDDENVNSQPFMRWRDRFVFCAEALYKAQAETGEIKGHYLNATAGTCEEMMKRAVFARELGAPIVMHDYLTGGFTANTSLAHYCRDNGLLLHIHRAMHAVIDRQKNHGMHFRVLAKGLRMSGGDHIHAGTVVGKLEGEREITLGFVDLLRDDFIEKDRSRGIFFTQDWVSMPGVIPVASGGIHVWHMPALTEIFGDDSVLQFGGGTLGHPWGNAPGAVANRVALEACVQARNEGRDLAREGNEIIREAAKWSPELA</sequence>
<accession>P93913</accession>